<accession>B3DTV1</accession>
<gene>
    <name evidence="1" type="primary">atpG</name>
    <name type="ordered locus">BLD_1124</name>
</gene>
<organism>
    <name type="scientific">Bifidobacterium longum (strain DJO10A)</name>
    <dbReference type="NCBI Taxonomy" id="205913"/>
    <lineage>
        <taxon>Bacteria</taxon>
        <taxon>Bacillati</taxon>
        <taxon>Actinomycetota</taxon>
        <taxon>Actinomycetes</taxon>
        <taxon>Bifidobacteriales</taxon>
        <taxon>Bifidobacteriaceae</taxon>
        <taxon>Bifidobacterium</taxon>
    </lineage>
</organism>
<sequence>MGSQLALKSRIRSTESLAKIFNAQEMIASSHIAKARDVALNAKPYTDAIFDAVQALVAHTHITHPIAVKDEKNPRVAVLALTSDRGMAGPYTSSIIRETESLLSRLDAAGKQPELFVYGRRGSTYYKYRNRDIAATWEGDTDQPGVEIAETISNTLMDAYMKPAEKGGVSELYIVYTEFINMVVQKVRVLRMLPVEIVKNETKVPDPDEEAPATADVAPLYTFEPSLEKVLDAILPKYIQSRIHECLLTAAASETASRQNAMHTATDNARNLIDDLTRKLNASRQASITQELTEIIGSADALTKKEE</sequence>
<reference key="1">
    <citation type="journal article" date="2008" name="BMC Genomics">
        <title>Comparative genomic analysis of the gut bacterium Bifidobacterium longum reveals loci susceptible to deletion during pure culture growth.</title>
        <authorList>
            <person name="Lee J.H."/>
            <person name="Karamychev V.N."/>
            <person name="Kozyavkin S.A."/>
            <person name="Mills D."/>
            <person name="Pavlov A.R."/>
            <person name="Pavlova N.V."/>
            <person name="Polouchine N.N."/>
            <person name="Richardson P.M."/>
            <person name="Shakhova V.V."/>
            <person name="Slesarev A.I."/>
            <person name="Weimer B."/>
            <person name="O'Sullivan D.J."/>
        </authorList>
    </citation>
    <scope>NUCLEOTIDE SEQUENCE [LARGE SCALE GENOMIC DNA]</scope>
    <source>
        <strain>DJO10A</strain>
    </source>
</reference>
<feature type="chain" id="PRO_1000134114" description="ATP synthase gamma chain">
    <location>
        <begin position="1"/>
        <end position="307"/>
    </location>
</feature>
<keyword id="KW-0066">ATP synthesis</keyword>
<keyword id="KW-1003">Cell membrane</keyword>
<keyword id="KW-0139">CF(1)</keyword>
<keyword id="KW-0375">Hydrogen ion transport</keyword>
<keyword id="KW-0406">Ion transport</keyword>
<keyword id="KW-0472">Membrane</keyword>
<keyword id="KW-0813">Transport</keyword>
<proteinExistence type="inferred from homology"/>
<dbReference type="EMBL" id="CP000605">
    <property type="protein sequence ID" value="ACD98570.1"/>
    <property type="molecule type" value="Genomic_DNA"/>
</dbReference>
<dbReference type="RefSeq" id="WP_007051479.1">
    <property type="nucleotide sequence ID" value="NZ_AABM02000027.1"/>
</dbReference>
<dbReference type="SMR" id="B3DTV1"/>
<dbReference type="KEGG" id="blj:BLD_1124"/>
<dbReference type="HOGENOM" id="CLU_050669_0_0_11"/>
<dbReference type="Proteomes" id="UP000002419">
    <property type="component" value="Chromosome"/>
</dbReference>
<dbReference type="GO" id="GO:0005886">
    <property type="term" value="C:plasma membrane"/>
    <property type="evidence" value="ECO:0007669"/>
    <property type="project" value="UniProtKB-SubCell"/>
</dbReference>
<dbReference type="GO" id="GO:0045259">
    <property type="term" value="C:proton-transporting ATP synthase complex"/>
    <property type="evidence" value="ECO:0007669"/>
    <property type="project" value="UniProtKB-KW"/>
</dbReference>
<dbReference type="GO" id="GO:0005524">
    <property type="term" value="F:ATP binding"/>
    <property type="evidence" value="ECO:0007669"/>
    <property type="project" value="UniProtKB-UniRule"/>
</dbReference>
<dbReference type="GO" id="GO:0046933">
    <property type="term" value="F:proton-transporting ATP synthase activity, rotational mechanism"/>
    <property type="evidence" value="ECO:0007669"/>
    <property type="project" value="UniProtKB-UniRule"/>
</dbReference>
<dbReference type="GO" id="GO:0042777">
    <property type="term" value="P:proton motive force-driven plasma membrane ATP synthesis"/>
    <property type="evidence" value="ECO:0007669"/>
    <property type="project" value="UniProtKB-UniRule"/>
</dbReference>
<dbReference type="CDD" id="cd12151">
    <property type="entry name" value="F1-ATPase_gamma"/>
    <property type="match status" value="1"/>
</dbReference>
<dbReference type="Gene3D" id="3.40.1380.10">
    <property type="match status" value="1"/>
</dbReference>
<dbReference type="Gene3D" id="1.10.287.80">
    <property type="entry name" value="ATP synthase, gamma subunit, helix hairpin domain"/>
    <property type="match status" value="2"/>
</dbReference>
<dbReference type="HAMAP" id="MF_00815">
    <property type="entry name" value="ATP_synth_gamma_bact"/>
    <property type="match status" value="1"/>
</dbReference>
<dbReference type="InterPro" id="IPR035968">
    <property type="entry name" value="ATP_synth_F1_ATPase_gsu"/>
</dbReference>
<dbReference type="InterPro" id="IPR000131">
    <property type="entry name" value="ATP_synth_F1_gsu"/>
</dbReference>
<dbReference type="NCBIfam" id="TIGR01146">
    <property type="entry name" value="ATPsyn_F1gamma"/>
    <property type="match status" value="1"/>
</dbReference>
<dbReference type="NCBIfam" id="NF004145">
    <property type="entry name" value="PRK05621.1-2"/>
    <property type="match status" value="1"/>
</dbReference>
<dbReference type="PANTHER" id="PTHR11693">
    <property type="entry name" value="ATP SYNTHASE GAMMA CHAIN"/>
    <property type="match status" value="1"/>
</dbReference>
<dbReference type="PANTHER" id="PTHR11693:SF22">
    <property type="entry name" value="ATP SYNTHASE SUBUNIT GAMMA, MITOCHONDRIAL"/>
    <property type="match status" value="1"/>
</dbReference>
<dbReference type="Pfam" id="PF00231">
    <property type="entry name" value="ATP-synt"/>
    <property type="match status" value="1"/>
</dbReference>
<dbReference type="PRINTS" id="PR00126">
    <property type="entry name" value="ATPASEGAMMA"/>
</dbReference>
<dbReference type="SUPFAM" id="SSF52943">
    <property type="entry name" value="ATP synthase (F1-ATPase), gamma subunit"/>
    <property type="match status" value="1"/>
</dbReference>
<evidence type="ECO:0000255" key="1">
    <source>
        <dbReference type="HAMAP-Rule" id="MF_00815"/>
    </source>
</evidence>
<protein>
    <recommendedName>
        <fullName evidence="1">ATP synthase gamma chain</fullName>
    </recommendedName>
    <alternativeName>
        <fullName evidence="1">ATP synthase F1 sector gamma subunit</fullName>
    </alternativeName>
    <alternativeName>
        <fullName evidence="1">F-ATPase gamma subunit</fullName>
    </alternativeName>
</protein>
<name>ATPG_BIFLD</name>
<comment type="function">
    <text evidence="1">Produces ATP from ADP in the presence of a proton gradient across the membrane. The gamma chain is believed to be important in regulating ATPase activity and the flow of protons through the CF(0) complex.</text>
</comment>
<comment type="subunit">
    <text evidence="1">F-type ATPases have 2 components, CF(1) - the catalytic core - and CF(0) - the membrane proton channel. CF(1) has five subunits: alpha(3), beta(3), gamma(1), delta(1), epsilon(1). CF(0) has three main subunits: a, b and c.</text>
</comment>
<comment type="subcellular location">
    <subcellularLocation>
        <location evidence="1">Cell membrane</location>
        <topology evidence="1">Peripheral membrane protein</topology>
    </subcellularLocation>
</comment>
<comment type="similarity">
    <text evidence="1">Belongs to the ATPase gamma chain family.</text>
</comment>